<organism>
    <name type="scientific">Brucella abortus (strain 2308)</name>
    <dbReference type="NCBI Taxonomy" id="359391"/>
    <lineage>
        <taxon>Bacteria</taxon>
        <taxon>Pseudomonadati</taxon>
        <taxon>Pseudomonadota</taxon>
        <taxon>Alphaproteobacteria</taxon>
        <taxon>Hyphomicrobiales</taxon>
        <taxon>Brucellaceae</taxon>
        <taxon>Brucella/Ochrobactrum group</taxon>
        <taxon>Brucella</taxon>
    </lineage>
</organism>
<sequence>MASLGGDNSQAEGAEVRHVPVLIAEVIDALKPAPGAVIVDGTFGAGGYTRRILETGADVIAIDRDPTAIEAGRAMEKEFPGRLNLVESRFSALDEAVARMSGAGKKVDGVVLDIGVSSMQIDEAERGFSFQKDGPLDMRMSSRGPSAADAVNRLKTGDLARIFNFLGEERHAGRIARMIEKRRAAKPFTRTLDLANAIETLVGRNPKDRIHPATRVFQALRVYVNDELGELARALLAAERILKPGGRLVVVTFHSLEDRMVKRFFADRAGGSAGSRHMPETHMRLPSFTPAVKGAVGPTPEEEERNPRARSAKLRAGIRTENPPLEDDLSLFGLPKLPETNELARS</sequence>
<keyword id="KW-0963">Cytoplasm</keyword>
<keyword id="KW-0489">Methyltransferase</keyword>
<keyword id="KW-1185">Reference proteome</keyword>
<keyword id="KW-0698">rRNA processing</keyword>
<keyword id="KW-0949">S-adenosyl-L-methionine</keyword>
<keyword id="KW-0808">Transferase</keyword>
<accession>Q2YM63</accession>
<protein>
    <recommendedName>
        <fullName evidence="1">Ribosomal RNA small subunit methyltransferase H</fullName>
        <ecNumber evidence="1">2.1.1.199</ecNumber>
    </recommendedName>
    <alternativeName>
        <fullName evidence="1">16S rRNA m(4)C1402 methyltransferase</fullName>
    </alternativeName>
    <alternativeName>
        <fullName evidence="1">rRNA (cytosine-N(4)-)-methyltransferase RsmH</fullName>
    </alternativeName>
</protein>
<reference key="1">
    <citation type="journal article" date="2005" name="Infect. Immun.">
        <title>Whole-genome analyses of speciation events in pathogenic Brucellae.</title>
        <authorList>
            <person name="Chain P.S."/>
            <person name="Comerci D.J."/>
            <person name="Tolmasky M.E."/>
            <person name="Larimer F.W."/>
            <person name="Malfatti S.A."/>
            <person name="Vergez L.M."/>
            <person name="Aguero F."/>
            <person name="Land M.L."/>
            <person name="Ugalde R.A."/>
            <person name="Garcia E."/>
        </authorList>
    </citation>
    <scope>NUCLEOTIDE SEQUENCE [LARGE SCALE GENOMIC DNA]</scope>
    <source>
        <strain>2308</strain>
    </source>
</reference>
<proteinExistence type="inferred from homology"/>
<comment type="function">
    <text evidence="1">Specifically methylates the N4 position of cytidine in position 1402 (C1402) of 16S rRNA.</text>
</comment>
<comment type="catalytic activity">
    <reaction evidence="1">
        <text>cytidine(1402) in 16S rRNA + S-adenosyl-L-methionine = N(4)-methylcytidine(1402) in 16S rRNA + S-adenosyl-L-homocysteine + H(+)</text>
        <dbReference type="Rhea" id="RHEA:42928"/>
        <dbReference type="Rhea" id="RHEA-COMP:10286"/>
        <dbReference type="Rhea" id="RHEA-COMP:10287"/>
        <dbReference type="ChEBI" id="CHEBI:15378"/>
        <dbReference type="ChEBI" id="CHEBI:57856"/>
        <dbReference type="ChEBI" id="CHEBI:59789"/>
        <dbReference type="ChEBI" id="CHEBI:74506"/>
        <dbReference type="ChEBI" id="CHEBI:82748"/>
        <dbReference type="EC" id="2.1.1.199"/>
    </reaction>
</comment>
<comment type="subcellular location">
    <subcellularLocation>
        <location evidence="1">Cytoplasm</location>
    </subcellularLocation>
</comment>
<comment type="similarity">
    <text evidence="1">Belongs to the methyltransferase superfamily. RsmH family.</text>
</comment>
<gene>
    <name evidence="1" type="primary">rsmH</name>
    <name type="synonym">mraW</name>
    <name type="ordered locus">BAB1_1458</name>
</gene>
<evidence type="ECO:0000255" key="1">
    <source>
        <dbReference type="HAMAP-Rule" id="MF_01007"/>
    </source>
</evidence>
<evidence type="ECO:0000256" key="2">
    <source>
        <dbReference type="SAM" id="MobiDB-lite"/>
    </source>
</evidence>
<name>RSMH_BRUA2</name>
<feature type="chain" id="PRO_0000223531" description="Ribosomal RNA small subunit methyltransferase H">
    <location>
        <begin position="1"/>
        <end position="346"/>
    </location>
</feature>
<feature type="region of interest" description="Disordered" evidence="2">
    <location>
        <begin position="270"/>
        <end position="346"/>
    </location>
</feature>
<feature type="binding site" evidence="1">
    <location>
        <begin position="46"/>
        <end position="48"/>
    </location>
    <ligand>
        <name>S-adenosyl-L-methionine</name>
        <dbReference type="ChEBI" id="CHEBI:59789"/>
    </ligand>
</feature>
<feature type="binding site" evidence="1">
    <location>
        <position position="63"/>
    </location>
    <ligand>
        <name>S-adenosyl-L-methionine</name>
        <dbReference type="ChEBI" id="CHEBI:59789"/>
    </ligand>
</feature>
<feature type="binding site" evidence="1">
    <location>
        <position position="90"/>
    </location>
    <ligand>
        <name>S-adenosyl-L-methionine</name>
        <dbReference type="ChEBI" id="CHEBI:59789"/>
    </ligand>
</feature>
<feature type="binding site" evidence="1">
    <location>
        <position position="113"/>
    </location>
    <ligand>
        <name>S-adenosyl-L-methionine</name>
        <dbReference type="ChEBI" id="CHEBI:59789"/>
    </ligand>
</feature>
<feature type="binding site" evidence="1">
    <location>
        <position position="120"/>
    </location>
    <ligand>
        <name>S-adenosyl-L-methionine</name>
        <dbReference type="ChEBI" id="CHEBI:59789"/>
    </ligand>
</feature>
<dbReference type="EC" id="2.1.1.199" evidence="1"/>
<dbReference type="EMBL" id="AM040264">
    <property type="protein sequence ID" value="CAJ11414.1"/>
    <property type="molecule type" value="Genomic_DNA"/>
</dbReference>
<dbReference type="SMR" id="Q2YM63"/>
<dbReference type="STRING" id="359391.BAB1_1458"/>
<dbReference type="KEGG" id="bmf:BAB1_1458"/>
<dbReference type="HOGENOM" id="CLU_038422_1_1_5"/>
<dbReference type="Proteomes" id="UP000002719">
    <property type="component" value="Chromosome I"/>
</dbReference>
<dbReference type="GO" id="GO:0005737">
    <property type="term" value="C:cytoplasm"/>
    <property type="evidence" value="ECO:0007669"/>
    <property type="project" value="UniProtKB-SubCell"/>
</dbReference>
<dbReference type="GO" id="GO:0071424">
    <property type="term" value="F:rRNA (cytosine-N4-)-methyltransferase activity"/>
    <property type="evidence" value="ECO:0007669"/>
    <property type="project" value="UniProtKB-UniRule"/>
</dbReference>
<dbReference type="GO" id="GO:0070475">
    <property type="term" value="P:rRNA base methylation"/>
    <property type="evidence" value="ECO:0007669"/>
    <property type="project" value="UniProtKB-UniRule"/>
</dbReference>
<dbReference type="CDD" id="cd02440">
    <property type="entry name" value="AdoMet_MTases"/>
    <property type="match status" value="1"/>
</dbReference>
<dbReference type="Gene3D" id="1.10.150.170">
    <property type="entry name" value="Putative methyltransferase TM0872, insert domain"/>
    <property type="match status" value="1"/>
</dbReference>
<dbReference type="Gene3D" id="3.40.50.150">
    <property type="entry name" value="Vaccinia Virus protein VP39"/>
    <property type="match status" value="1"/>
</dbReference>
<dbReference type="HAMAP" id="MF_01007">
    <property type="entry name" value="16SrRNA_methyltr_H"/>
    <property type="match status" value="1"/>
</dbReference>
<dbReference type="InterPro" id="IPR002903">
    <property type="entry name" value="RsmH"/>
</dbReference>
<dbReference type="InterPro" id="IPR023397">
    <property type="entry name" value="SAM-dep_MeTrfase_MraW_recog"/>
</dbReference>
<dbReference type="InterPro" id="IPR029063">
    <property type="entry name" value="SAM-dependent_MTases_sf"/>
</dbReference>
<dbReference type="NCBIfam" id="TIGR00006">
    <property type="entry name" value="16S rRNA (cytosine(1402)-N(4))-methyltransferase RsmH"/>
    <property type="match status" value="1"/>
</dbReference>
<dbReference type="PANTHER" id="PTHR11265:SF0">
    <property type="entry name" value="12S RRNA N4-METHYLCYTIDINE METHYLTRANSFERASE"/>
    <property type="match status" value="1"/>
</dbReference>
<dbReference type="PANTHER" id="PTHR11265">
    <property type="entry name" value="S-ADENOSYL-METHYLTRANSFERASE MRAW"/>
    <property type="match status" value="1"/>
</dbReference>
<dbReference type="Pfam" id="PF01795">
    <property type="entry name" value="Methyltransf_5"/>
    <property type="match status" value="1"/>
</dbReference>
<dbReference type="PIRSF" id="PIRSF004486">
    <property type="entry name" value="MraW"/>
    <property type="match status" value="1"/>
</dbReference>
<dbReference type="SUPFAM" id="SSF81799">
    <property type="entry name" value="Putative methyltransferase TM0872, insert domain"/>
    <property type="match status" value="1"/>
</dbReference>
<dbReference type="SUPFAM" id="SSF53335">
    <property type="entry name" value="S-adenosyl-L-methionine-dependent methyltransferases"/>
    <property type="match status" value="1"/>
</dbReference>